<reference key="1">
    <citation type="journal article" date="2000" name="Nature">
        <title>Sequence and analysis of chromosome 5 of the plant Arabidopsis thaliana.</title>
        <authorList>
            <person name="Tabata S."/>
            <person name="Kaneko T."/>
            <person name="Nakamura Y."/>
            <person name="Kotani H."/>
            <person name="Kato T."/>
            <person name="Asamizu E."/>
            <person name="Miyajima N."/>
            <person name="Sasamoto S."/>
            <person name="Kimura T."/>
            <person name="Hosouchi T."/>
            <person name="Kawashima K."/>
            <person name="Kohara M."/>
            <person name="Matsumoto M."/>
            <person name="Matsuno A."/>
            <person name="Muraki A."/>
            <person name="Nakayama S."/>
            <person name="Nakazaki N."/>
            <person name="Naruo K."/>
            <person name="Okumura S."/>
            <person name="Shinpo S."/>
            <person name="Takeuchi C."/>
            <person name="Wada T."/>
            <person name="Watanabe A."/>
            <person name="Yamada M."/>
            <person name="Yasuda M."/>
            <person name="Sato S."/>
            <person name="de la Bastide M."/>
            <person name="Huang E."/>
            <person name="Spiegel L."/>
            <person name="Gnoj L."/>
            <person name="O'Shaughnessy A."/>
            <person name="Preston R."/>
            <person name="Habermann K."/>
            <person name="Murray J."/>
            <person name="Johnson D."/>
            <person name="Rohlfing T."/>
            <person name="Nelson J."/>
            <person name="Stoneking T."/>
            <person name="Pepin K."/>
            <person name="Spieth J."/>
            <person name="Sekhon M."/>
            <person name="Armstrong J."/>
            <person name="Becker M."/>
            <person name="Belter E."/>
            <person name="Cordum H."/>
            <person name="Cordes M."/>
            <person name="Courtney L."/>
            <person name="Courtney W."/>
            <person name="Dante M."/>
            <person name="Du H."/>
            <person name="Edwards J."/>
            <person name="Fryman J."/>
            <person name="Haakensen B."/>
            <person name="Lamar E."/>
            <person name="Latreille P."/>
            <person name="Leonard S."/>
            <person name="Meyer R."/>
            <person name="Mulvaney E."/>
            <person name="Ozersky P."/>
            <person name="Riley A."/>
            <person name="Strowmatt C."/>
            <person name="Wagner-McPherson C."/>
            <person name="Wollam A."/>
            <person name="Yoakum M."/>
            <person name="Bell M."/>
            <person name="Dedhia N."/>
            <person name="Parnell L."/>
            <person name="Shah R."/>
            <person name="Rodriguez M."/>
            <person name="Hoon See L."/>
            <person name="Vil D."/>
            <person name="Baker J."/>
            <person name="Kirchoff K."/>
            <person name="Toth K."/>
            <person name="King L."/>
            <person name="Bahret A."/>
            <person name="Miller B."/>
            <person name="Marra M.A."/>
            <person name="Martienssen R."/>
            <person name="McCombie W.R."/>
            <person name="Wilson R.K."/>
            <person name="Murphy G."/>
            <person name="Bancroft I."/>
            <person name="Volckaert G."/>
            <person name="Wambutt R."/>
            <person name="Duesterhoeft A."/>
            <person name="Stiekema W."/>
            <person name="Pohl T."/>
            <person name="Entian K.-D."/>
            <person name="Terryn N."/>
            <person name="Hartley N."/>
            <person name="Bent E."/>
            <person name="Johnson S."/>
            <person name="Langham S.-A."/>
            <person name="McCullagh B."/>
            <person name="Robben J."/>
            <person name="Grymonprez B."/>
            <person name="Zimmermann W."/>
            <person name="Ramsperger U."/>
            <person name="Wedler H."/>
            <person name="Balke K."/>
            <person name="Wedler E."/>
            <person name="Peters S."/>
            <person name="van Staveren M."/>
            <person name="Dirkse W."/>
            <person name="Mooijman P."/>
            <person name="Klein Lankhorst R."/>
            <person name="Weitzenegger T."/>
            <person name="Bothe G."/>
            <person name="Rose M."/>
            <person name="Hauf J."/>
            <person name="Berneiser S."/>
            <person name="Hempel S."/>
            <person name="Feldpausch M."/>
            <person name="Lamberth S."/>
            <person name="Villarroel R."/>
            <person name="Gielen J."/>
            <person name="Ardiles W."/>
            <person name="Bents O."/>
            <person name="Lemcke K."/>
            <person name="Kolesov G."/>
            <person name="Mayer K.F.X."/>
            <person name="Rudd S."/>
            <person name="Schoof H."/>
            <person name="Schueller C."/>
            <person name="Zaccaria P."/>
            <person name="Mewes H.-W."/>
            <person name="Bevan M."/>
            <person name="Fransz P.F."/>
        </authorList>
    </citation>
    <scope>NUCLEOTIDE SEQUENCE [LARGE SCALE GENOMIC DNA]</scope>
    <source>
        <strain>cv. Columbia</strain>
    </source>
</reference>
<reference key="2">
    <citation type="journal article" date="2017" name="Plant J.">
        <title>Araport11: a complete reannotation of the Arabidopsis thaliana reference genome.</title>
        <authorList>
            <person name="Cheng C.Y."/>
            <person name="Krishnakumar V."/>
            <person name="Chan A.P."/>
            <person name="Thibaud-Nissen F."/>
            <person name="Schobel S."/>
            <person name="Town C.D."/>
        </authorList>
    </citation>
    <scope>GENOME REANNOTATION</scope>
    <source>
        <strain>cv. Columbia</strain>
    </source>
</reference>
<reference key="3">
    <citation type="journal article" date="2007" name="FEBS Lett.">
        <title>Nitrate transporters and peptide transporters.</title>
        <authorList>
            <person name="Tsay Y.F."/>
            <person name="Chiu C.C."/>
            <person name="Tsai C.B."/>
            <person name="Ho C.H."/>
            <person name="Hsu P.K."/>
        </authorList>
    </citation>
    <scope>TISSUE SPECIFICITY</scope>
    <scope>GENE FAMILY</scope>
</reference>
<reference key="4">
    <citation type="journal article" date="2010" name="Plant Cell">
        <title>The Arabidopsis nitrate transporter NRT1.8 functions in nitrate removal from the xylem sap and mediates cadmium tolerance.</title>
        <authorList>
            <person name="Li J.Y."/>
            <person name="Fu Y.L."/>
            <person name="Pike S.M."/>
            <person name="Bao J."/>
            <person name="Tian W."/>
            <person name="Zhang Y."/>
            <person name="Chen C.Z."/>
            <person name="Zhang Y."/>
            <person name="Li H.M."/>
            <person name="Huang J."/>
            <person name="Li L.G."/>
            <person name="Schroeder J.I."/>
            <person name="Gassmann W."/>
            <person name="Gong J.M."/>
        </authorList>
    </citation>
    <scope>GENE FAMILY</scope>
</reference>
<reference key="5">
    <citation type="journal article" date="2014" name="Trends Plant Sci.">
        <title>A unified nomenclature of NITRATE TRANSPORTER 1/PEPTIDE TRANSPORTER family members in plants.</title>
        <authorList>
            <person name="Leran S."/>
            <person name="Varala K."/>
            <person name="Boyer J.C."/>
            <person name="Chiurazzi M."/>
            <person name="Crawford N."/>
            <person name="Daniel-Vedele F."/>
            <person name="David L."/>
            <person name="Dickstein R."/>
            <person name="Fernandez E."/>
            <person name="Forde B."/>
            <person name="Gassmann W."/>
            <person name="Geiger D."/>
            <person name="Gojon A."/>
            <person name="Gong J.M."/>
            <person name="Halkier B.A."/>
            <person name="Harris J.M."/>
            <person name="Hedrich R."/>
            <person name="Limami A.M."/>
            <person name="Rentsch D."/>
            <person name="Seo M."/>
            <person name="Tsay Y.F."/>
            <person name="Zhang M."/>
            <person name="Coruzzi G."/>
            <person name="Lacombe B."/>
        </authorList>
    </citation>
    <scope>GENE FAMILY</scope>
    <scope>NOMENCLATURE</scope>
</reference>
<proteinExistence type="evidence at transcript level"/>
<dbReference type="EMBL" id="AF296838">
    <property type="status" value="NOT_ANNOTATED_CDS"/>
    <property type="molecule type" value="Genomic_DNA"/>
</dbReference>
<dbReference type="EMBL" id="CP002688">
    <property type="protein sequence ID" value="AED92733.1"/>
    <property type="molecule type" value="Genomic_DNA"/>
</dbReference>
<dbReference type="RefSeq" id="NP_001318602.1">
    <property type="nucleotide sequence ID" value="NM_001343618.1"/>
</dbReference>
<dbReference type="SMR" id="Q3E9B5"/>
<dbReference type="FunCoup" id="Q3E9B5">
    <property type="interactions" value="1502"/>
</dbReference>
<dbReference type="STRING" id="3702.Q3E9B5"/>
<dbReference type="PaxDb" id="3702-AT5G19640.1"/>
<dbReference type="ProteomicsDB" id="226101"/>
<dbReference type="EnsemblPlants" id="AT5G19640.1">
    <property type="protein sequence ID" value="AT5G19640.1"/>
    <property type="gene ID" value="AT5G19640"/>
</dbReference>
<dbReference type="GeneID" id="832084"/>
<dbReference type="Gramene" id="AT5G19640.1">
    <property type="protein sequence ID" value="AT5G19640.1"/>
    <property type="gene ID" value="AT5G19640"/>
</dbReference>
<dbReference type="KEGG" id="ath:AT5G19640"/>
<dbReference type="Araport" id="AT5G19640"/>
<dbReference type="TAIR" id="AT5G19640">
    <property type="gene designation" value="NFP7.1"/>
</dbReference>
<dbReference type="eggNOG" id="KOG1237">
    <property type="taxonomic scope" value="Eukaryota"/>
</dbReference>
<dbReference type="HOGENOM" id="CLU_009313_4_1_1"/>
<dbReference type="InParanoid" id="Q3E9B5"/>
<dbReference type="OMA" id="YRYLKPC"/>
<dbReference type="PhylomeDB" id="Q3E9B5"/>
<dbReference type="PRO" id="PR:Q3E9B5"/>
<dbReference type="Proteomes" id="UP000006548">
    <property type="component" value="Chromosome 5"/>
</dbReference>
<dbReference type="ExpressionAtlas" id="Q3E9B5">
    <property type="expression patterns" value="baseline and differential"/>
</dbReference>
<dbReference type="GO" id="GO:0005886">
    <property type="term" value="C:plasma membrane"/>
    <property type="evidence" value="ECO:0000314"/>
    <property type="project" value="TAIR"/>
</dbReference>
<dbReference type="GO" id="GO:0022857">
    <property type="term" value="F:transmembrane transporter activity"/>
    <property type="evidence" value="ECO:0007669"/>
    <property type="project" value="InterPro"/>
</dbReference>
<dbReference type="CDD" id="cd17419">
    <property type="entry name" value="MFS_NPF7"/>
    <property type="match status" value="1"/>
</dbReference>
<dbReference type="Gene3D" id="1.20.1250.20">
    <property type="entry name" value="MFS general substrate transporter like domains"/>
    <property type="match status" value="1"/>
</dbReference>
<dbReference type="InterPro" id="IPR036259">
    <property type="entry name" value="MFS_trans_sf"/>
</dbReference>
<dbReference type="InterPro" id="IPR000109">
    <property type="entry name" value="POT_fam"/>
</dbReference>
<dbReference type="PANTHER" id="PTHR11654">
    <property type="entry name" value="OLIGOPEPTIDE TRANSPORTER-RELATED"/>
    <property type="match status" value="1"/>
</dbReference>
<dbReference type="Pfam" id="PF00854">
    <property type="entry name" value="PTR2"/>
    <property type="match status" value="1"/>
</dbReference>
<dbReference type="SUPFAM" id="SSF103473">
    <property type="entry name" value="MFS general substrate transporter"/>
    <property type="match status" value="1"/>
</dbReference>
<sequence length="609" mass="67463">MAAMDPRNNGNVAPLNERERAENLEVREVVEVQDDQSVVSLMSNDSDLQKKMMKKEEKKNGGWTNAIILLVNQGLATLAFFGVGVNLVLFLTRVMGQGNAEAANNVSKWTGTVYMFSLVGAFLSDSYWGRYLTCTIFQVIFVIGVGLLSFVSWFFLIKPRGCGDGDLECNPPSSLGVAIFYLSVYLVAFGYGGHQPTLATFGADQLDDDKNSKAAFFSYFYFALNVGALFSNTILVYFEDKGLWTEGFLVSLGSAIVALVAFLAPTRQYRYVKPCGNPLPRVAQVFVATARKWSVVRPGDPHELYELEGPESAIKGSRKIFHSTKFLFLDRAAVITENDRNGTRSNAWRLCSVTQVEEAKCVMKLLPIWLCTIIYSVIFTQMASLFVEQGDVMNAYVGKFHIPAASMSVFDIFSVFVSTGIYRHIIFPYVRPTELMRMGIGLIIGIMAMVAAGLTEIQRLKRVVPGQKESELTILWQIPQYVLVGASEVFMYVGQLEFFNGQAPDGLKNLGSSLCMASMALGNYVSSLMVNIVMAITKRGENSPGWIPENLNEGHMDRFYFLIAALAAIDFVVYLIFAKWYQPISHDEDSIKGGSGGSLKKTVSELEQV</sequence>
<accession>Q3E9B5</accession>
<comment type="subcellular location">
    <subcellularLocation>
        <location evidence="1">Membrane</location>
        <topology evidence="1">Multi-pass membrane protein</topology>
    </subcellularLocation>
</comment>
<comment type="tissue specificity">
    <text evidence="4">Expressed in flowers.</text>
</comment>
<comment type="similarity">
    <text evidence="5">Belongs to the major facilitator superfamily. Proton-dependent oligopeptide transporter (POT/PTR) (TC 2.A.17) family.</text>
</comment>
<keyword id="KW-0472">Membrane</keyword>
<keyword id="KW-0597">Phosphoprotein</keyword>
<keyword id="KW-1185">Reference proteome</keyword>
<keyword id="KW-0812">Transmembrane</keyword>
<keyword id="KW-1133">Transmembrane helix</keyword>
<keyword id="KW-0813">Transport</keyword>
<evidence type="ECO:0000250" key="1"/>
<evidence type="ECO:0000250" key="2">
    <source>
        <dbReference type="UniProtKB" id="Q05085"/>
    </source>
</evidence>
<evidence type="ECO:0000255" key="3"/>
<evidence type="ECO:0000269" key="4">
    <source>
    </source>
</evidence>
<evidence type="ECO:0000305" key="5"/>
<feature type="chain" id="PRO_0000399985" description="Protein NRT1/ PTR FAMILY 7.1">
    <location>
        <begin position="1"/>
        <end position="609"/>
    </location>
</feature>
<feature type="transmembrane region" description="Helical" evidence="3">
    <location>
        <begin position="67"/>
        <end position="87"/>
    </location>
</feature>
<feature type="transmembrane region" description="Helical" evidence="3">
    <location>
        <begin position="109"/>
        <end position="129"/>
    </location>
</feature>
<feature type="transmembrane region" description="Helical" evidence="3">
    <location>
        <begin position="136"/>
        <end position="156"/>
    </location>
</feature>
<feature type="transmembrane region" description="Helical" evidence="3">
    <location>
        <begin position="173"/>
        <end position="193"/>
    </location>
</feature>
<feature type="transmembrane region" description="Helical" evidence="3">
    <location>
        <begin position="216"/>
        <end position="236"/>
    </location>
</feature>
<feature type="transmembrane region" description="Helical" evidence="3">
    <location>
        <begin position="243"/>
        <end position="263"/>
    </location>
</feature>
<feature type="transmembrane region" description="Helical" evidence="3">
    <location>
        <begin position="367"/>
        <end position="387"/>
    </location>
</feature>
<feature type="transmembrane region" description="Helical" evidence="3">
    <location>
        <begin position="402"/>
        <end position="422"/>
    </location>
</feature>
<feature type="transmembrane region" description="Helical" evidence="3">
    <location>
        <begin position="438"/>
        <end position="458"/>
    </location>
</feature>
<feature type="transmembrane region" description="Helical" evidence="3">
    <location>
        <begin position="474"/>
        <end position="494"/>
    </location>
</feature>
<feature type="transmembrane region" description="Helical" evidence="3">
    <location>
        <begin position="516"/>
        <end position="536"/>
    </location>
</feature>
<feature type="transmembrane region" description="Helical" evidence="3">
    <location>
        <begin position="559"/>
        <end position="579"/>
    </location>
</feature>
<feature type="modified residue" description="Phosphothreonine" evidence="2">
    <location>
        <position position="133"/>
    </location>
</feature>
<name>PTR51_ARATH</name>
<gene>
    <name type="primary">NPF7.1</name>
    <name type="ordered locus">At5g19640</name>
    <name type="ORF">T29J13</name>
</gene>
<protein>
    <recommendedName>
        <fullName>Protein NRT1/ PTR FAMILY 7.1</fullName>
        <shortName>AtNPF7.1</shortName>
    </recommendedName>
</protein>
<organism>
    <name type="scientific">Arabidopsis thaliana</name>
    <name type="common">Mouse-ear cress</name>
    <dbReference type="NCBI Taxonomy" id="3702"/>
    <lineage>
        <taxon>Eukaryota</taxon>
        <taxon>Viridiplantae</taxon>
        <taxon>Streptophyta</taxon>
        <taxon>Embryophyta</taxon>
        <taxon>Tracheophyta</taxon>
        <taxon>Spermatophyta</taxon>
        <taxon>Magnoliopsida</taxon>
        <taxon>eudicotyledons</taxon>
        <taxon>Gunneridae</taxon>
        <taxon>Pentapetalae</taxon>
        <taxon>rosids</taxon>
        <taxon>malvids</taxon>
        <taxon>Brassicales</taxon>
        <taxon>Brassicaceae</taxon>
        <taxon>Camelineae</taxon>
        <taxon>Arabidopsis</taxon>
    </lineage>
</organism>